<evidence type="ECO:0000250" key="1"/>
<evidence type="ECO:0000305" key="2"/>
<organism>
    <name type="scientific">Brucella abortus biovar 1 (strain 9-941)</name>
    <dbReference type="NCBI Taxonomy" id="262698"/>
    <lineage>
        <taxon>Bacteria</taxon>
        <taxon>Pseudomonadati</taxon>
        <taxon>Pseudomonadota</taxon>
        <taxon>Alphaproteobacteria</taxon>
        <taxon>Hyphomicrobiales</taxon>
        <taxon>Brucellaceae</taxon>
        <taxon>Brucella/Ochrobactrum group</taxon>
        <taxon>Brucella</taxon>
    </lineage>
</organism>
<name>NIKR_BRUAB</name>
<feature type="chain" id="PRO_0000139282" description="Nickel-responsive regulator">
    <location>
        <begin position="1"/>
        <end position="132"/>
    </location>
</feature>
<feature type="binding site" evidence="1">
    <location>
        <position position="77"/>
    </location>
    <ligand>
        <name>Ni(2+)</name>
        <dbReference type="ChEBI" id="CHEBI:49786"/>
    </ligand>
</feature>
<feature type="binding site" evidence="1">
    <location>
        <position position="88"/>
    </location>
    <ligand>
        <name>Ni(2+)</name>
        <dbReference type="ChEBI" id="CHEBI:49786"/>
    </ligand>
</feature>
<feature type="binding site" evidence="1">
    <location>
        <position position="90"/>
    </location>
    <ligand>
        <name>Ni(2+)</name>
        <dbReference type="ChEBI" id="CHEBI:49786"/>
    </ligand>
</feature>
<feature type="binding site" evidence="1">
    <location>
        <position position="96"/>
    </location>
    <ligand>
        <name>Ni(2+)</name>
        <dbReference type="ChEBI" id="CHEBI:49786"/>
    </ligand>
</feature>
<keyword id="KW-0238">DNA-binding</keyword>
<keyword id="KW-0479">Metal-binding</keyword>
<keyword id="KW-0533">Nickel</keyword>
<keyword id="KW-0678">Repressor</keyword>
<keyword id="KW-0804">Transcription</keyword>
<keyword id="KW-0805">Transcription regulation</keyword>
<dbReference type="EMBL" id="AE017224">
    <property type="protein sequence ID" value="AAX75853.1"/>
    <property type="molecule type" value="Genomic_DNA"/>
</dbReference>
<dbReference type="RefSeq" id="WP_002965835.1">
    <property type="nucleotide sequence ID" value="NC_006933.1"/>
</dbReference>
<dbReference type="SMR" id="Q578T1"/>
<dbReference type="EnsemblBacteria" id="AAX75853">
    <property type="protein sequence ID" value="AAX75853"/>
    <property type="gene ID" value="BruAb2_0427"/>
</dbReference>
<dbReference type="GeneID" id="97535107"/>
<dbReference type="KEGG" id="bmb:BruAb2_0427"/>
<dbReference type="HOGENOM" id="CLU_113319_1_4_5"/>
<dbReference type="Proteomes" id="UP000000540">
    <property type="component" value="Chromosome II"/>
</dbReference>
<dbReference type="GO" id="GO:0003677">
    <property type="term" value="F:DNA binding"/>
    <property type="evidence" value="ECO:0007669"/>
    <property type="project" value="UniProtKB-KW"/>
</dbReference>
<dbReference type="GO" id="GO:0003700">
    <property type="term" value="F:DNA-binding transcription factor activity"/>
    <property type="evidence" value="ECO:0007669"/>
    <property type="project" value="UniProtKB-UniRule"/>
</dbReference>
<dbReference type="GO" id="GO:0016151">
    <property type="term" value="F:nickel cation binding"/>
    <property type="evidence" value="ECO:0007669"/>
    <property type="project" value="UniProtKB-UniRule"/>
</dbReference>
<dbReference type="GO" id="GO:0010045">
    <property type="term" value="P:response to nickel cation"/>
    <property type="evidence" value="ECO:0007669"/>
    <property type="project" value="InterPro"/>
</dbReference>
<dbReference type="CDD" id="cd22231">
    <property type="entry name" value="RHH_NikR_HicB-like"/>
    <property type="match status" value="1"/>
</dbReference>
<dbReference type="Gene3D" id="3.30.70.1150">
    <property type="entry name" value="ACT-like. Chain A, domain 2"/>
    <property type="match status" value="1"/>
</dbReference>
<dbReference type="Gene3D" id="1.10.1220.10">
    <property type="entry name" value="Met repressor-like"/>
    <property type="match status" value="1"/>
</dbReference>
<dbReference type="HAMAP" id="MF_00476">
    <property type="entry name" value="NikR"/>
    <property type="match status" value="1"/>
</dbReference>
<dbReference type="InterPro" id="IPR027271">
    <property type="entry name" value="Acetolactate_synth/TF_NikR_C"/>
</dbReference>
<dbReference type="InterPro" id="IPR045865">
    <property type="entry name" value="ACT-like_dom_sf"/>
</dbReference>
<dbReference type="InterPro" id="IPR013321">
    <property type="entry name" value="Arc_rbn_hlx_hlx"/>
</dbReference>
<dbReference type="InterPro" id="IPR002145">
    <property type="entry name" value="CopG"/>
</dbReference>
<dbReference type="InterPro" id="IPR050192">
    <property type="entry name" value="CopG/NikR_regulator"/>
</dbReference>
<dbReference type="InterPro" id="IPR022988">
    <property type="entry name" value="Ni_resp_reg_NikR"/>
</dbReference>
<dbReference type="InterPro" id="IPR014160">
    <property type="entry name" value="Nickel_NikR_proteobac"/>
</dbReference>
<dbReference type="InterPro" id="IPR010985">
    <property type="entry name" value="Ribbon_hlx_hlx"/>
</dbReference>
<dbReference type="InterPro" id="IPR014864">
    <property type="entry name" value="TF_NikR_Ni-bd_C"/>
</dbReference>
<dbReference type="NCBIfam" id="TIGR02793">
    <property type="entry name" value="nikR"/>
    <property type="match status" value="1"/>
</dbReference>
<dbReference type="NCBIfam" id="NF002815">
    <property type="entry name" value="PRK02967.1"/>
    <property type="match status" value="1"/>
</dbReference>
<dbReference type="NCBIfam" id="NF003381">
    <property type="entry name" value="PRK04460.1"/>
    <property type="match status" value="1"/>
</dbReference>
<dbReference type="PANTHER" id="PTHR34719">
    <property type="entry name" value="NICKEL-RESPONSIVE REGULATOR"/>
    <property type="match status" value="1"/>
</dbReference>
<dbReference type="PANTHER" id="PTHR34719:SF2">
    <property type="entry name" value="NICKEL-RESPONSIVE REGULATOR"/>
    <property type="match status" value="1"/>
</dbReference>
<dbReference type="Pfam" id="PF08753">
    <property type="entry name" value="NikR_C"/>
    <property type="match status" value="1"/>
</dbReference>
<dbReference type="Pfam" id="PF01402">
    <property type="entry name" value="RHH_1"/>
    <property type="match status" value="1"/>
</dbReference>
<dbReference type="SUPFAM" id="SSF55021">
    <property type="entry name" value="ACT-like"/>
    <property type="match status" value="1"/>
</dbReference>
<dbReference type="SUPFAM" id="SSF47598">
    <property type="entry name" value="Ribbon-helix-helix"/>
    <property type="match status" value="1"/>
</dbReference>
<sequence length="132" mass="14930">MQRITITIDDDLMAALDRMIEIKGYQNRSEALRDLARTGLQQASLEEGQMEACVGVLSYTYDHSARDLSKKLTNTHHDHHNISVASMHVHLDHDRCLEVSILKGKTDDVRHFADHVKAERHVTHGTLAVLPL</sequence>
<proteinExistence type="inferred from homology"/>
<protein>
    <recommendedName>
        <fullName>Nickel-responsive regulator</fullName>
    </recommendedName>
</protein>
<comment type="function">
    <text evidence="1">Transcriptional repressor of the nikABCDE operon. Is active in the presence of excessive concentrations of intracellular nickel (By similarity).</text>
</comment>
<comment type="cofactor">
    <cofactor evidence="1">
        <name>Ni(2+)</name>
        <dbReference type="ChEBI" id="CHEBI:49786"/>
    </cofactor>
    <text evidence="1">Binds 1 nickel ion per subunit.</text>
</comment>
<comment type="similarity">
    <text evidence="2">Belongs to the transcriptional regulatory CopG/NikR family.</text>
</comment>
<gene>
    <name type="primary">nikR</name>
    <name type="ordered locus">BruAb2_0427</name>
</gene>
<reference key="1">
    <citation type="journal article" date="2005" name="J. Bacteriol.">
        <title>Completion of the genome sequence of Brucella abortus and comparison to the highly similar genomes of Brucella melitensis and Brucella suis.</title>
        <authorList>
            <person name="Halling S.M."/>
            <person name="Peterson-Burch B.D."/>
            <person name="Bricker B.J."/>
            <person name="Zuerner R.L."/>
            <person name="Qing Z."/>
            <person name="Li L.-L."/>
            <person name="Kapur V."/>
            <person name="Alt D.P."/>
            <person name="Olsen S.C."/>
        </authorList>
    </citation>
    <scope>NUCLEOTIDE SEQUENCE [LARGE SCALE GENOMIC DNA]</scope>
    <source>
        <strain>9-941</strain>
    </source>
</reference>
<accession>Q578T1</accession>